<comment type="function">
    <text evidence="1">Plays an important role in the de novo pathway of purine nucleotide biosynthesis. Catalyzes the first committed step in the biosynthesis of AMP from IMP.</text>
</comment>
<comment type="catalytic activity">
    <reaction evidence="1">
        <text>IMP + L-aspartate + GTP = N(6)-(1,2-dicarboxyethyl)-AMP + GDP + phosphate + 2 H(+)</text>
        <dbReference type="Rhea" id="RHEA:15753"/>
        <dbReference type="ChEBI" id="CHEBI:15378"/>
        <dbReference type="ChEBI" id="CHEBI:29991"/>
        <dbReference type="ChEBI" id="CHEBI:37565"/>
        <dbReference type="ChEBI" id="CHEBI:43474"/>
        <dbReference type="ChEBI" id="CHEBI:57567"/>
        <dbReference type="ChEBI" id="CHEBI:58053"/>
        <dbReference type="ChEBI" id="CHEBI:58189"/>
        <dbReference type="EC" id="6.3.4.4"/>
    </reaction>
</comment>
<comment type="cofactor">
    <cofactor evidence="1">
        <name>Mg(2+)</name>
        <dbReference type="ChEBI" id="CHEBI:18420"/>
    </cofactor>
    <text evidence="1">Binds 1 Mg(2+) ion per subunit.</text>
</comment>
<comment type="pathway">
    <text evidence="1">Purine metabolism; AMP biosynthesis via de novo pathway; AMP from IMP: step 1/2.</text>
</comment>
<comment type="subunit">
    <text evidence="1">Homodimer.</text>
</comment>
<comment type="subcellular location">
    <subcellularLocation>
        <location evidence="1">Cytoplasm</location>
    </subcellularLocation>
</comment>
<comment type="similarity">
    <text evidence="1">Belongs to the adenylosuccinate synthetase family.</text>
</comment>
<dbReference type="EC" id="6.3.4.4" evidence="1"/>
<dbReference type="EMBL" id="CP000576">
    <property type="protein sequence ID" value="ABO17156.1"/>
    <property type="molecule type" value="Genomic_DNA"/>
</dbReference>
<dbReference type="RefSeq" id="WP_011862526.1">
    <property type="nucleotide sequence ID" value="NC_009091.1"/>
</dbReference>
<dbReference type="SMR" id="A3PBN1"/>
<dbReference type="STRING" id="167546.P9301_05331"/>
<dbReference type="KEGG" id="pmg:P9301_05331"/>
<dbReference type="eggNOG" id="COG0104">
    <property type="taxonomic scope" value="Bacteria"/>
</dbReference>
<dbReference type="HOGENOM" id="CLU_029848_0_0_3"/>
<dbReference type="OrthoDB" id="9807553at2"/>
<dbReference type="UniPathway" id="UPA00075">
    <property type="reaction ID" value="UER00335"/>
</dbReference>
<dbReference type="Proteomes" id="UP000001430">
    <property type="component" value="Chromosome"/>
</dbReference>
<dbReference type="GO" id="GO:0005737">
    <property type="term" value="C:cytoplasm"/>
    <property type="evidence" value="ECO:0007669"/>
    <property type="project" value="UniProtKB-SubCell"/>
</dbReference>
<dbReference type="GO" id="GO:0004019">
    <property type="term" value="F:adenylosuccinate synthase activity"/>
    <property type="evidence" value="ECO:0007669"/>
    <property type="project" value="UniProtKB-UniRule"/>
</dbReference>
<dbReference type="GO" id="GO:0005525">
    <property type="term" value="F:GTP binding"/>
    <property type="evidence" value="ECO:0007669"/>
    <property type="project" value="UniProtKB-UniRule"/>
</dbReference>
<dbReference type="GO" id="GO:0000287">
    <property type="term" value="F:magnesium ion binding"/>
    <property type="evidence" value="ECO:0007669"/>
    <property type="project" value="UniProtKB-UniRule"/>
</dbReference>
<dbReference type="GO" id="GO:0044208">
    <property type="term" value="P:'de novo' AMP biosynthetic process"/>
    <property type="evidence" value="ECO:0007669"/>
    <property type="project" value="UniProtKB-UniRule"/>
</dbReference>
<dbReference type="GO" id="GO:0046040">
    <property type="term" value="P:IMP metabolic process"/>
    <property type="evidence" value="ECO:0007669"/>
    <property type="project" value="TreeGrafter"/>
</dbReference>
<dbReference type="CDD" id="cd03108">
    <property type="entry name" value="AdSS"/>
    <property type="match status" value="1"/>
</dbReference>
<dbReference type="FunFam" id="1.10.300.10:FF:000001">
    <property type="entry name" value="Adenylosuccinate synthetase"/>
    <property type="match status" value="1"/>
</dbReference>
<dbReference type="FunFam" id="3.90.170.10:FF:000001">
    <property type="entry name" value="Adenylosuccinate synthetase"/>
    <property type="match status" value="1"/>
</dbReference>
<dbReference type="Gene3D" id="3.40.440.10">
    <property type="entry name" value="Adenylosuccinate Synthetase, subunit A, domain 1"/>
    <property type="match status" value="1"/>
</dbReference>
<dbReference type="Gene3D" id="1.10.300.10">
    <property type="entry name" value="Adenylosuccinate Synthetase, subunit A, domain 2"/>
    <property type="match status" value="1"/>
</dbReference>
<dbReference type="Gene3D" id="3.90.170.10">
    <property type="entry name" value="Adenylosuccinate Synthetase, subunit A, domain 3"/>
    <property type="match status" value="1"/>
</dbReference>
<dbReference type="HAMAP" id="MF_00011">
    <property type="entry name" value="Adenylosucc_synth"/>
    <property type="match status" value="1"/>
</dbReference>
<dbReference type="InterPro" id="IPR018220">
    <property type="entry name" value="Adenylosuccin_syn_GTP-bd"/>
</dbReference>
<dbReference type="InterPro" id="IPR033128">
    <property type="entry name" value="Adenylosuccin_syn_Lys_AS"/>
</dbReference>
<dbReference type="InterPro" id="IPR042109">
    <property type="entry name" value="Adenylosuccinate_synth_dom1"/>
</dbReference>
<dbReference type="InterPro" id="IPR042110">
    <property type="entry name" value="Adenylosuccinate_synth_dom2"/>
</dbReference>
<dbReference type="InterPro" id="IPR042111">
    <property type="entry name" value="Adenylosuccinate_synth_dom3"/>
</dbReference>
<dbReference type="InterPro" id="IPR001114">
    <property type="entry name" value="Adenylosuccinate_synthetase"/>
</dbReference>
<dbReference type="InterPro" id="IPR027417">
    <property type="entry name" value="P-loop_NTPase"/>
</dbReference>
<dbReference type="NCBIfam" id="NF002223">
    <property type="entry name" value="PRK01117.1"/>
    <property type="match status" value="1"/>
</dbReference>
<dbReference type="NCBIfam" id="TIGR00184">
    <property type="entry name" value="purA"/>
    <property type="match status" value="1"/>
</dbReference>
<dbReference type="PANTHER" id="PTHR11846">
    <property type="entry name" value="ADENYLOSUCCINATE SYNTHETASE"/>
    <property type="match status" value="1"/>
</dbReference>
<dbReference type="PANTHER" id="PTHR11846:SF0">
    <property type="entry name" value="ADENYLOSUCCINATE SYNTHETASE"/>
    <property type="match status" value="1"/>
</dbReference>
<dbReference type="Pfam" id="PF00709">
    <property type="entry name" value="Adenylsucc_synt"/>
    <property type="match status" value="1"/>
</dbReference>
<dbReference type="SMART" id="SM00788">
    <property type="entry name" value="Adenylsucc_synt"/>
    <property type="match status" value="1"/>
</dbReference>
<dbReference type="SUPFAM" id="SSF52540">
    <property type="entry name" value="P-loop containing nucleoside triphosphate hydrolases"/>
    <property type="match status" value="1"/>
</dbReference>
<dbReference type="PROSITE" id="PS01266">
    <property type="entry name" value="ADENYLOSUCCIN_SYN_1"/>
    <property type="match status" value="1"/>
</dbReference>
<dbReference type="PROSITE" id="PS00513">
    <property type="entry name" value="ADENYLOSUCCIN_SYN_2"/>
    <property type="match status" value="1"/>
</dbReference>
<reference key="1">
    <citation type="journal article" date="2007" name="PLoS Genet.">
        <title>Patterns and implications of gene gain and loss in the evolution of Prochlorococcus.</title>
        <authorList>
            <person name="Kettler G.C."/>
            <person name="Martiny A.C."/>
            <person name="Huang K."/>
            <person name="Zucker J."/>
            <person name="Coleman M.L."/>
            <person name="Rodrigue S."/>
            <person name="Chen F."/>
            <person name="Lapidus A."/>
            <person name="Ferriera S."/>
            <person name="Johnson J."/>
            <person name="Steglich C."/>
            <person name="Church G.M."/>
            <person name="Richardson P."/>
            <person name="Chisholm S.W."/>
        </authorList>
    </citation>
    <scope>NUCLEOTIDE SEQUENCE [LARGE SCALE GENOMIC DNA]</scope>
    <source>
        <strain>MIT 9301</strain>
    </source>
</reference>
<protein>
    <recommendedName>
        <fullName evidence="1">Adenylosuccinate synthetase</fullName>
        <shortName evidence="1">AMPSase</shortName>
        <shortName evidence="1">AdSS</shortName>
        <ecNumber evidence="1">6.3.4.4</ecNumber>
    </recommendedName>
    <alternativeName>
        <fullName evidence="1">IMP--aspartate ligase</fullName>
    </alternativeName>
</protein>
<feature type="chain" id="PRO_1000000888" description="Adenylosuccinate synthetase">
    <location>
        <begin position="1"/>
        <end position="436"/>
    </location>
</feature>
<feature type="active site" description="Proton acceptor" evidence="1">
    <location>
        <position position="13"/>
    </location>
</feature>
<feature type="active site" description="Proton donor" evidence="1">
    <location>
        <position position="41"/>
    </location>
</feature>
<feature type="binding site" evidence="1">
    <location>
        <begin position="12"/>
        <end position="18"/>
    </location>
    <ligand>
        <name>GTP</name>
        <dbReference type="ChEBI" id="CHEBI:37565"/>
    </ligand>
</feature>
<feature type="binding site" description="in other chain" evidence="1">
    <location>
        <begin position="13"/>
        <end position="16"/>
    </location>
    <ligand>
        <name>IMP</name>
        <dbReference type="ChEBI" id="CHEBI:58053"/>
        <note>ligand shared between dimeric partners</note>
    </ligand>
</feature>
<feature type="binding site" evidence="1">
    <location>
        <position position="13"/>
    </location>
    <ligand>
        <name>Mg(2+)</name>
        <dbReference type="ChEBI" id="CHEBI:18420"/>
    </ligand>
</feature>
<feature type="binding site" description="in other chain" evidence="1">
    <location>
        <begin position="38"/>
        <end position="41"/>
    </location>
    <ligand>
        <name>IMP</name>
        <dbReference type="ChEBI" id="CHEBI:58053"/>
        <note>ligand shared between dimeric partners</note>
    </ligand>
</feature>
<feature type="binding site" evidence="1">
    <location>
        <begin position="40"/>
        <end position="42"/>
    </location>
    <ligand>
        <name>GTP</name>
        <dbReference type="ChEBI" id="CHEBI:37565"/>
    </ligand>
</feature>
<feature type="binding site" evidence="1">
    <location>
        <position position="40"/>
    </location>
    <ligand>
        <name>Mg(2+)</name>
        <dbReference type="ChEBI" id="CHEBI:18420"/>
    </ligand>
</feature>
<feature type="binding site" description="in other chain" evidence="1">
    <location>
        <position position="128"/>
    </location>
    <ligand>
        <name>IMP</name>
        <dbReference type="ChEBI" id="CHEBI:58053"/>
        <note>ligand shared between dimeric partners</note>
    </ligand>
</feature>
<feature type="binding site" evidence="1">
    <location>
        <position position="142"/>
    </location>
    <ligand>
        <name>IMP</name>
        <dbReference type="ChEBI" id="CHEBI:58053"/>
        <note>ligand shared between dimeric partners</note>
    </ligand>
</feature>
<feature type="binding site" description="in other chain" evidence="1">
    <location>
        <position position="223"/>
    </location>
    <ligand>
        <name>IMP</name>
        <dbReference type="ChEBI" id="CHEBI:58053"/>
        <note>ligand shared between dimeric partners</note>
    </ligand>
</feature>
<feature type="binding site" description="in other chain" evidence="1">
    <location>
        <position position="238"/>
    </location>
    <ligand>
        <name>IMP</name>
        <dbReference type="ChEBI" id="CHEBI:58053"/>
        <note>ligand shared between dimeric partners</note>
    </ligand>
</feature>
<feature type="binding site" evidence="1">
    <location>
        <begin position="298"/>
        <end position="304"/>
    </location>
    <ligand>
        <name>substrate</name>
    </ligand>
</feature>
<feature type="binding site" description="in other chain" evidence="1">
    <location>
        <position position="302"/>
    </location>
    <ligand>
        <name>IMP</name>
        <dbReference type="ChEBI" id="CHEBI:58053"/>
        <note>ligand shared between dimeric partners</note>
    </ligand>
</feature>
<feature type="binding site" evidence="1">
    <location>
        <position position="304"/>
    </location>
    <ligand>
        <name>GTP</name>
        <dbReference type="ChEBI" id="CHEBI:37565"/>
    </ligand>
</feature>
<feature type="binding site" evidence="1">
    <location>
        <begin position="330"/>
        <end position="332"/>
    </location>
    <ligand>
        <name>GTP</name>
        <dbReference type="ChEBI" id="CHEBI:37565"/>
    </ligand>
</feature>
<feature type="binding site" evidence="1">
    <location>
        <begin position="412"/>
        <end position="414"/>
    </location>
    <ligand>
        <name>GTP</name>
        <dbReference type="ChEBI" id="CHEBI:37565"/>
    </ligand>
</feature>
<proteinExistence type="inferred from homology"/>
<gene>
    <name evidence="1" type="primary">purA</name>
    <name type="ordered locus">P9301_05331</name>
</gene>
<name>PURA_PROM0</name>
<evidence type="ECO:0000255" key="1">
    <source>
        <dbReference type="HAMAP-Rule" id="MF_00011"/>
    </source>
</evidence>
<organism>
    <name type="scientific">Prochlorococcus marinus (strain MIT 9301)</name>
    <dbReference type="NCBI Taxonomy" id="167546"/>
    <lineage>
        <taxon>Bacteria</taxon>
        <taxon>Bacillati</taxon>
        <taxon>Cyanobacteriota</taxon>
        <taxon>Cyanophyceae</taxon>
        <taxon>Synechococcales</taxon>
        <taxon>Prochlorococcaceae</taxon>
        <taxon>Prochlorococcus</taxon>
    </lineage>
</organism>
<keyword id="KW-0963">Cytoplasm</keyword>
<keyword id="KW-0342">GTP-binding</keyword>
<keyword id="KW-0436">Ligase</keyword>
<keyword id="KW-0460">Magnesium</keyword>
<keyword id="KW-0479">Metal-binding</keyword>
<keyword id="KW-0547">Nucleotide-binding</keyword>
<keyword id="KW-0658">Purine biosynthesis</keyword>
<keyword id="KW-1185">Reference proteome</keyword>
<sequence length="436" mass="47725">MANVVVIGAQWGDEGKGKITDLLSRSADVVVRYQGGVNAGHTIVVDDKVLKLHLIPSGILYKNTSCLIGSGTVVDPKILLKEIDMLIDNGIDISGLKISSTSHVTMPYHRILDEAMEADRGSNKIGTTGRGIGPTYADKSQRNGIRIRDLLNKERLSDVIEIPLREKNGLLEKIYGIKPLKLEDIVEEYLDYGERLSKHVVDCTRTIHAASKNKKNILFEGAQGTLLDLDHGTYPFVTSSNPISGGACIGAGVGPTLIDRVIGVAKAYTTRVGEGPFPTELQGSINDQLCDRGSEFGTTTGRRRRCGWFDGVIGKYAVSVNGLDCLAVTKLDVLDELDEIQVCIAYDLDGEKIDYFPTNSDELKKCKPIFKKLKGWQCSTADCRKLSDLPENAMNYLRFLAELMEVPIAIVSLGANRDQTIVIEDPIHGPKRALLR</sequence>
<accession>A3PBN1</accession>